<evidence type="ECO:0000255" key="1"/>
<evidence type="ECO:0000255" key="2">
    <source>
        <dbReference type="HAMAP-Rule" id="MF_01260"/>
    </source>
</evidence>
<comment type="function">
    <text evidence="2">The physiological role of BioH is to remove the methyl group introduced by BioC when the pimeloyl moiety is complete. It allows to synthesize pimeloyl-ACP via the fatty acid synthetic pathway through the hydrolysis of the ester bonds of pimeloyl-ACP esters.</text>
</comment>
<comment type="catalytic activity">
    <reaction evidence="2">
        <text>6-carboxyhexanoyl-[ACP] methyl ester + H2O = 6-carboxyhexanoyl-[ACP] + methanol + H(+)</text>
        <dbReference type="Rhea" id="RHEA:42700"/>
        <dbReference type="Rhea" id="RHEA-COMP:9955"/>
        <dbReference type="Rhea" id="RHEA-COMP:10186"/>
        <dbReference type="ChEBI" id="CHEBI:15377"/>
        <dbReference type="ChEBI" id="CHEBI:15378"/>
        <dbReference type="ChEBI" id="CHEBI:17790"/>
        <dbReference type="ChEBI" id="CHEBI:78846"/>
        <dbReference type="ChEBI" id="CHEBI:82735"/>
        <dbReference type="EC" id="3.1.1.85"/>
    </reaction>
</comment>
<comment type="pathway">
    <text evidence="2">Cofactor biosynthesis; biotin biosynthesis.</text>
</comment>
<comment type="subunit">
    <text evidence="2">Monomer.</text>
</comment>
<comment type="subcellular location">
    <subcellularLocation>
        <location evidence="2">Cytoplasm</location>
    </subcellularLocation>
</comment>
<comment type="similarity">
    <text evidence="2">Belongs to the AB hydrolase superfamily. Carboxylesterase BioH family.</text>
</comment>
<accession>Q664J8</accession>
<reference key="1">
    <citation type="journal article" date="2004" name="Proc. Natl. Acad. Sci. U.S.A.">
        <title>Insights into the evolution of Yersinia pestis through whole-genome comparison with Yersinia pseudotuberculosis.</title>
        <authorList>
            <person name="Chain P.S.G."/>
            <person name="Carniel E."/>
            <person name="Larimer F.W."/>
            <person name="Lamerdin J."/>
            <person name="Stoutland P.O."/>
            <person name="Regala W.M."/>
            <person name="Georgescu A.M."/>
            <person name="Vergez L.M."/>
            <person name="Land M.L."/>
            <person name="Motin V.L."/>
            <person name="Brubaker R.R."/>
            <person name="Fowler J."/>
            <person name="Hinnebusch J."/>
            <person name="Marceau M."/>
            <person name="Medigue C."/>
            <person name="Simonet M."/>
            <person name="Chenal-Francisque V."/>
            <person name="Souza B."/>
            <person name="Dacheux D."/>
            <person name="Elliott J.M."/>
            <person name="Derbise A."/>
            <person name="Hauser L.J."/>
            <person name="Garcia E."/>
        </authorList>
    </citation>
    <scope>NUCLEOTIDE SEQUENCE [LARGE SCALE GENOMIC DNA]</scope>
    <source>
        <strain>IP32953</strain>
    </source>
</reference>
<keyword id="KW-0093">Biotin biosynthesis</keyword>
<keyword id="KW-0963">Cytoplasm</keyword>
<keyword id="KW-0378">Hydrolase</keyword>
<keyword id="KW-0719">Serine esterase</keyword>
<name>BIOH_YERPS</name>
<gene>
    <name evidence="2" type="primary">bioH</name>
    <name type="ordered locus">YPTB3771</name>
</gene>
<feature type="chain" id="PRO_0000204507" description="Pimeloyl-[acyl-carrier protein] methyl ester esterase">
    <location>
        <begin position="1"/>
        <end position="258"/>
    </location>
</feature>
<feature type="domain" description="AB hydrolase-1" evidence="1">
    <location>
        <begin position="16"/>
        <end position="242"/>
    </location>
</feature>
<feature type="active site" description="Nucleophile" evidence="2">
    <location>
        <position position="82"/>
    </location>
</feature>
<feature type="active site" evidence="2">
    <location>
        <position position="207"/>
    </location>
</feature>
<feature type="active site" evidence="2">
    <location>
        <position position="235"/>
    </location>
</feature>
<feature type="binding site" evidence="2">
    <location>
        <position position="22"/>
    </location>
    <ligand>
        <name>substrate</name>
    </ligand>
</feature>
<feature type="binding site" evidence="2">
    <location>
        <begin position="82"/>
        <end position="83"/>
    </location>
    <ligand>
        <name>substrate</name>
    </ligand>
</feature>
<feature type="binding site" evidence="2">
    <location>
        <begin position="143"/>
        <end position="147"/>
    </location>
    <ligand>
        <name>substrate</name>
    </ligand>
</feature>
<feature type="binding site" evidence="2">
    <location>
        <position position="235"/>
    </location>
    <ligand>
        <name>substrate</name>
    </ligand>
</feature>
<proteinExistence type="inferred from homology"/>
<organism>
    <name type="scientific">Yersinia pseudotuberculosis serotype I (strain IP32953)</name>
    <dbReference type="NCBI Taxonomy" id="273123"/>
    <lineage>
        <taxon>Bacteria</taxon>
        <taxon>Pseudomonadati</taxon>
        <taxon>Pseudomonadota</taxon>
        <taxon>Gammaproteobacteria</taxon>
        <taxon>Enterobacterales</taxon>
        <taxon>Yersiniaceae</taxon>
        <taxon>Yersinia</taxon>
    </lineage>
</organism>
<sequence>MKQLYWYTCGEGDCDLVLLHGWGLNSGVWHCIIDRLAPHFRLHLVDLPGYGRSQDYGAMSLADMAERVAQQAPKQALWLGWSMGGLVASQIALSQPECVRGLITVSSSPCFTARDEWPGIKPEVLAGFQHQLSDDFHRTVERFLALQTLGTESSRQDARLLKSVVLQHQMPDVEVLTGGLEILRTADLRTALSGFTLPFMRVYGHLDSLVPRKVASLLDSAWPQTQSVVMQGAAHAPFISHPNDFAKLILNFAEENKK</sequence>
<protein>
    <recommendedName>
        <fullName evidence="2">Pimeloyl-[acyl-carrier protein] methyl ester esterase</fullName>
        <ecNumber evidence="2">3.1.1.85</ecNumber>
    </recommendedName>
    <alternativeName>
        <fullName evidence="2">Biotin synthesis protein BioH</fullName>
    </alternativeName>
    <alternativeName>
        <fullName evidence="2">Carboxylesterase BioH</fullName>
    </alternativeName>
</protein>
<dbReference type="EC" id="3.1.1.85" evidence="2"/>
<dbReference type="EMBL" id="BX936398">
    <property type="protein sequence ID" value="CAH23009.1"/>
    <property type="molecule type" value="Genomic_DNA"/>
</dbReference>
<dbReference type="RefSeq" id="WP_011193243.1">
    <property type="nucleotide sequence ID" value="NC_006155.1"/>
</dbReference>
<dbReference type="SMR" id="Q664J8"/>
<dbReference type="ESTHER" id="yerpe-BIOH">
    <property type="family name" value="BioH"/>
</dbReference>
<dbReference type="GeneID" id="49784234"/>
<dbReference type="KEGG" id="ypo:BZ17_2814"/>
<dbReference type="KEGG" id="yps:YPTB3771"/>
<dbReference type="PATRIC" id="fig|273123.14.peg.2953"/>
<dbReference type="UniPathway" id="UPA00078"/>
<dbReference type="Proteomes" id="UP000001011">
    <property type="component" value="Chromosome"/>
</dbReference>
<dbReference type="GO" id="GO:0005737">
    <property type="term" value="C:cytoplasm"/>
    <property type="evidence" value="ECO:0007669"/>
    <property type="project" value="UniProtKB-SubCell"/>
</dbReference>
<dbReference type="GO" id="GO:0090499">
    <property type="term" value="F:pimelyl-[acyl-carrier protein] methyl ester esterase activity"/>
    <property type="evidence" value="ECO:0007669"/>
    <property type="project" value="UniProtKB-EC"/>
</dbReference>
<dbReference type="GO" id="GO:0009102">
    <property type="term" value="P:biotin biosynthetic process"/>
    <property type="evidence" value="ECO:0007669"/>
    <property type="project" value="UniProtKB-UniRule"/>
</dbReference>
<dbReference type="Gene3D" id="3.40.50.1820">
    <property type="entry name" value="alpha/beta hydrolase"/>
    <property type="match status" value="1"/>
</dbReference>
<dbReference type="HAMAP" id="MF_01260">
    <property type="entry name" value="Carboxylester"/>
    <property type="match status" value="1"/>
</dbReference>
<dbReference type="InterPro" id="IPR000073">
    <property type="entry name" value="AB_hydrolase_1"/>
</dbReference>
<dbReference type="InterPro" id="IPR029058">
    <property type="entry name" value="AB_hydrolase_fold"/>
</dbReference>
<dbReference type="InterPro" id="IPR010076">
    <property type="entry name" value="BioH"/>
</dbReference>
<dbReference type="InterPro" id="IPR050228">
    <property type="entry name" value="Carboxylesterase_BioH"/>
</dbReference>
<dbReference type="NCBIfam" id="TIGR01738">
    <property type="entry name" value="bioH"/>
    <property type="match status" value="1"/>
</dbReference>
<dbReference type="PANTHER" id="PTHR43194">
    <property type="entry name" value="HYDROLASE ALPHA/BETA FOLD FAMILY"/>
    <property type="match status" value="1"/>
</dbReference>
<dbReference type="PANTHER" id="PTHR43194:SF5">
    <property type="entry name" value="PIMELOYL-[ACYL-CARRIER PROTEIN] METHYL ESTER ESTERASE"/>
    <property type="match status" value="1"/>
</dbReference>
<dbReference type="Pfam" id="PF00561">
    <property type="entry name" value="Abhydrolase_1"/>
    <property type="match status" value="1"/>
</dbReference>
<dbReference type="SUPFAM" id="SSF53474">
    <property type="entry name" value="alpha/beta-Hydrolases"/>
    <property type="match status" value="1"/>
</dbReference>